<proteinExistence type="inferred from homology"/>
<sequence length="467" mass="50696">MATGKIVQIIGAVVDVEFPQSEVPSVYDALNVTDSKERLVLEVQQQLGGGVVRCIVMGSSDGLRRGVEVVNTGAPISVPVGTKTLGRIMNVLGDAIDERGEIGAEEVYSIHREAPSYEEQSNETALLETGVKVIDLVCPFAKGGKIGLFGGAGVGKTVNMMELINNIALQHSGLSVFAGVGERTREGNDFYFEMQEAGVVNVENPEESKVAMVYGQMNEPPGNRLRVALTGLTMAERFRDEGRDVLLFVDNIYRYTLAGTEVSALLGRMPSAVGYQPTLAEEMGVLQERITSTKQGSITSVQAVYVPADDLTDPSPATTFAHLDATVVLNRNIAAMGLYPAIDPLDSTSRQLDPLVVGQDHYDIARGVQQTLQRYKELKDIIAILGMDELSESDKQVVSRARKIERFLTQPYHVAEVFTGDPGVYVPLKETLRGFKGLLAGEYDDIPEQAFMYCGTIDDAIENAKKL</sequence>
<accession>Q87KA8</accession>
<feature type="chain" id="PRO_0000254421" description="ATP synthase subunit beta">
    <location>
        <begin position="1"/>
        <end position="467"/>
    </location>
</feature>
<feature type="binding site" evidence="1">
    <location>
        <begin position="150"/>
        <end position="157"/>
    </location>
    <ligand>
        <name>ATP</name>
        <dbReference type="ChEBI" id="CHEBI:30616"/>
    </ligand>
</feature>
<keyword id="KW-0066">ATP synthesis</keyword>
<keyword id="KW-0067">ATP-binding</keyword>
<keyword id="KW-0997">Cell inner membrane</keyword>
<keyword id="KW-1003">Cell membrane</keyword>
<keyword id="KW-0139">CF(1)</keyword>
<keyword id="KW-0375">Hydrogen ion transport</keyword>
<keyword id="KW-0406">Ion transport</keyword>
<keyword id="KW-0472">Membrane</keyword>
<keyword id="KW-0547">Nucleotide-binding</keyword>
<keyword id="KW-1278">Translocase</keyword>
<keyword id="KW-0813">Transport</keyword>
<reference key="1">
    <citation type="journal article" date="2003" name="Lancet">
        <title>Genome sequence of Vibrio parahaemolyticus: a pathogenic mechanism distinct from that of V. cholerae.</title>
        <authorList>
            <person name="Makino K."/>
            <person name="Oshima K."/>
            <person name="Kurokawa K."/>
            <person name="Yokoyama K."/>
            <person name="Uda T."/>
            <person name="Tagomori K."/>
            <person name="Iijima Y."/>
            <person name="Najima M."/>
            <person name="Nakano M."/>
            <person name="Yamashita A."/>
            <person name="Kubota Y."/>
            <person name="Kimura S."/>
            <person name="Yasunaga T."/>
            <person name="Honda T."/>
            <person name="Shinagawa H."/>
            <person name="Hattori M."/>
            <person name="Iida T."/>
        </authorList>
    </citation>
    <scope>NUCLEOTIDE SEQUENCE [LARGE SCALE GENOMIC DNA]</scope>
    <source>
        <strain>RIMD 2210633</strain>
    </source>
</reference>
<protein>
    <recommendedName>
        <fullName evidence="1">ATP synthase subunit beta</fullName>
        <ecNumber evidence="1">7.1.2.2</ecNumber>
    </recommendedName>
    <alternativeName>
        <fullName evidence="1">ATP synthase F1 sector subunit beta</fullName>
    </alternativeName>
    <alternativeName>
        <fullName evidence="1">F-ATPase subunit beta</fullName>
    </alternativeName>
</protein>
<comment type="function">
    <text evidence="1">Produces ATP from ADP in the presence of a proton gradient across the membrane. The catalytic sites are hosted primarily by the beta subunits.</text>
</comment>
<comment type="catalytic activity">
    <reaction evidence="1">
        <text>ATP + H2O + 4 H(+)(in) = ADP + phosphate + 5 H(+)(out)</text>
        <dbReference type="Rhea" id="RHEA:57720"/>
        <dbReference type="ChEBI" id="CHEBI:15377"/>
        <dbReference type="ChEBI" id="CHEBI:15378"/>
        <dbReference type="ChEBI" id="CHEBI:30616"/>
        <dbReference type="ChEBI" id="CHEBI:43474"/>
        <dbReference type="ChEBI" id="CHEBI:456216"/>
        <dbReference type="EC" id="7.1.2.2"/>
    </reaction>
</comment>
<comment type="subunit">
    <text evidence="1">F-type ATPases have 2 components, CF(1) - the catalytic core - and CF(0) - the membrane proton channel. CF(1) has five subunits: alpha(3), beta(3), gamma(1), delta(1), epsilon(1). CF(0) has three main subunits: a(1), b(2) and c(9-12). The alpha and beta chains form an alternating ring which encloses part of the gamma chain. CF(1) is attached to CF(0) by a central stalk formed by the gamma and epsilon chains, while a peripheral stalk is formed by the delta and b chains.</text>
</comment>
<comment type="subcellular location">
    <subcellularLocation>
        <location evidence="1">Cell inner membrane</location>
        <topology evidence="1">Peripheral membrane protein</topology>
    </subcellularLocation>
</comment>
<comment type="similarity">
    <text evidence="1">Belongs to the ATPase alpha/beta chains family.</text>
</comment>
<gene>
    <name evidence="1" type="primary">atpD</name>
    <name type="ordered locus">VP3069</name>
</gene>
<organism>
    <name type="scientific">Vibrio parahaemolyticus serotype O3:K6 (strain RIMD 2210633)</name>
    <dbReference type="NCBI Taxonomy" id="223926"/>
    <lineage>
        <taxon>Bacteria</taxon>
        <taxon>Pseudomonadati</taxon>
        <taxon>Pseudomonadota</taxon>
        <taxon>Gammaproteobacteria</taxon>
        <taxon>Vibrionales</taxon>
        <taxon>Vibrionaceae</taxon>
        <taxon>Vibrio</taxon>
    </lineage>
</organism>
<name>ATPB_VIBPA</name>
<dbReference type="EC" id="7.1.2.2" evidence="1"/>
<dbReference type="EMBL" id="BA000031">
    <property type="protein sequence ID" value="BAC61332.1"/>
    <property type="molecule type" value="Genomic_DNA"/>
</dbReference>
<dbReference type="RefSeq" id="NP_799448.1">
    <property type="nucleotide sequence ID" value="NC_004603.1"/>
</dbReference>
<dbReference type="RefSeq" id="WP_005481178.1">
    <property type="nucleotide sequence ID" value="NC_004603.1"/>
</dbReference>
<dbReference type="SMR" id="Q87KA8"/>
<dbReference type="GeneID" id="1190668"/>
<dbReference type="KEGG" id="vpa:VP3069"/>
<dbReference type="PATRIC" id="fig|223926.6.peg.2955"/>
<dbReference type="eggNOG" id="COG0055">
    <property type="taxonomic scope" value="Bacteria"/>
</dbReference>
<dbReference type="HOGENOM" id="CLU_022398_0_2_6"/>
<dbReference type="Proteomes" id="UP000002493">
    <property type="component" value="Chromosome 1"/>
</dbReference>
<dbReference type="GO" id="GO:0005886">
    <property type="term" value="C:plasma membrane"/>
    <property type="evidence" value="ECO:0007669"/>
    <property type="project" value="UniProtKB-SubCell"/>
</dbReference>
<dbReference type="GO" id="GO:0045259">
    <property type="term" value="C:proton-transporting ATP synthase complex"/>
    <property type="evidence" value="ECO:0007669"/>
    <property type="project" value="UniProtKB-KW"/>
</dbReference>
<dbReference type="GO" id="GO:0005524">
    <property type="term" value="F:ATP binding"/>
    <property type="evidence" value="ECO:0007669"/>
    <property type="project" value="UniProtKB-UniRule"/>
</dbReference>
<dbReference type="GO" id="GO:0016887">
    <property type="term" value="F:ATP hydrolysis activity"/>
    <property type="evidence" value="ECO:0007669"/>
    <property type="project" value="InterPro"/>
</dbReference>
<dbReference type="GO" id="GO:0046933">
    <property type="term" value="F:proton-transporting ATP synthase activity, rotational mechanism"/>
    <property type="evidence" value="ECO:0007669"/>
    <property type="project" value="UniProtKB-UniRule"/>
</dbReference>
<dbReference type="CDD" id="cd18110">
    <property type="entry name" value="ATP-synt_F1_beta_C"/>
    <property type="match status" value="1"/>
</dbReference>
<dbReference type="CDD" id="cd18115">
    <property type="entry name" value="ATP-synt_F1_beta_N"/>
    <property type="match status" value="1"/>
</dbReference>
<dbReference type="CDD" id="cd01133">
    <property type="entry name" value="F1-ATPase_beta_CD"/>
    <property type="match status" value="1"/>
</dbReference>
<dbReference type="FunFam" id="1.10.1140.10:FF:000001">
    <property type="entry name" value="ATP synthase subunit beta"/>
    <property type="match status" value="1"/>
</dbReference>
<dbReference type="FunFam" id="2.40.10.170:FF:000003">
    <property type="entry name" value="ATP synthase subunit beta"/>
    <property type="match status" value="1"/>
</dbReference>
<dbReference type="FunFam" id="3.40.50.300:FF:000004">
    <property type="entry name" value="ATP synthase subunit beta"/>
    <property type="match status" value="1"/>
</dbReference>
<dbReference type="Gene3D" id="2.40.10.170">
    <property type="match status" value="1"/>
</dbReference>
<dbReference type="Gene3D" id="1.10.1140.10">
    <property type="entry name" value="Bovine Mitochondrial F1-atpase, Atp Synthase Beta Chain, Chain D, domain 3"/>
    <property type="match status" value="1"/>
</dbReference>
<dbReference type="Gene3D" id="3.40.50.300">
    <property type="entry name" value="P-loop containing nucleotide triphosphate hydrolases"/>
    <property type="match status" value="1"/>
</dbReference>
<dbReference type="HAMAP" id="MF_01347">
    <property type="entry name" value="ATP_synth_beta_bact"/>
    <property type="match status" value="1"/>
</dbReference>
<dbReference type="InterPro" id="IPR003593">
    <property type="entry name" value="AAA+_ATPase"/>
</dbReference>
<dbReference type="InterPro" id="IPR055190">
    <property type="entry name" value="ATP-synt_VA_C"/>
</dbReference>
<dbReference type="InterPro" id="IPR005722">
    <property type="entry name" value="ATP_synth_F1_bsu"/>
</dbReference>
<dbReference type="InterPro" id="IPR020003">
    <property type="entry name" value="ATPase_a/bsu_AS"/>
</dbReference>
<dbReference type="InterPro" id="IPR050053">
    <property type="entry name" value="ATPase_alpha/beta_chains"/>
</dbReference>
<dbReference type="InterPro" id="IPR004100">
    <property type="entry name" value="ATPase_F1/V1/A1_a/bsu_N"/>
</dbReference>
<dbReference type="InterPro" id="IPR036121">
    <property type="entry name" value="ATPase_F1/V1/A1_a/bsu_N_sf"/>
</dbReference>
<dbReference type="InterPro" id="IPR000194">
    <property type="entry name" value="ATPase_F1/V1/A1_a/bsu_nucl-bd"/>
</dbReference>
<dbReference type="InterPro" id="IPR024034">
    <property type="entry name" value="ATPase_F1/V1_b/a_C"/>
</dbReference>
<dbReference type="InterPro" id="IPR027417">
    <property type="entry name" value="P-loop_NTPase"/>
</dbReference>
<dbReference type="NCBIfam" id="TIGR01039">
    <property type="entry name" value="atpD"/>
    <property type="match status" value="1"/>
</dbReference>
<dbReference type="PANTHER" id="PTHR15184">
    <property type="entry name" value="ATP SYNTHASE"/>
    <property type="match status" value="1"/>
</dbReference>
<dbReference type="PANTHER" id="PTHR15184:SF71">
    <property type="entry name" value="ATP SYNTHASE SUBUNIT BETA, MITOCHONDRIAL"/>
    <property type="match status" value="1"/>
</dbReference>
<dbReference type="Pfam" id="PF00006">
    <property type="entry name" value="ATP-synt_ab"/>
    <property type="match status" value="1"/>
</dbReference>
<dbReference type="Pfam" id="PF02874">
    <property type="entry name" value="ATP-synt_ab_N"/>
    <property type="match status" value="1"/>
</dbReference>
<dbReference type="Pfam" id="PF22919">
    <property type="entry name" value="ATP-synt_VA_C"/>
    <property type="match status" value="1"/>
</dbReference>
<dbReference type="SMART" id="SM00382">
    <property type="entry name" value="AAA"/>
    <property type="match status" value="1"/>
</dbReference>
<dbReference type="SUPFAM" id="SSF47917">
    <property type="entry name" value="C-terminal domain of alpha and beta subunits of F1 ATP synthase"/>
    <property type="match status" value="1"/>
</dbReference>
<dbReference type="SUPFAM" id="SSF50615">
    <property type="entry name" value="N-terminal domain of alpha and beta subunits of F1 ATP synthase"/>
    <property type="match status" value="1"/>
</dbReference>
<dbReference type="SUPFAM" id="SSF52540">
    <property type="entry name" value="P-loop containing nucleoside triphosphate hydrolases"/>
    <property type="match status" value="1"/>
</dbReference>
<dbReference type="PROSITE" id="PS00152">
    <property type="entry name" value="ATPASE_ALPHA_BETA"/>
    <property type="match status" value="1"/>
</dbReference>
<evidence type="ECO:0000255" key="1">
    <source>
        <dbReference type="HAMAP-Rule" id="MF_01347"/>
    </source>
</evidence>